<name>GSA_NITV4</name>
<comment type="catalytic activity">
    <reaction evidence="1">
        <text>(S)-4-amino-5-oxopentanoate = 5-aminolevulinate</text>
        <dbReference type="Rhea" id="RHEA:14265"/>
        <dbReference type="ChEBI" id="CHEBI:57501"/>
        <dbReference type="ChEBI" id="CHEBI:356416"/>
        <dbReference type="EC" id="5.4.3.8"/>
    </reaction>
</comment>
<comment type="cofactor">
    <cofactor evidence="1">
        <name>pyridoxal 5'-phosphate</name>
        <dbReference type="ChEBI" id="CHEBI:597326"/>
    </cofactor>
</comment>
<comment type="pathway">
    <text evidence="1">Porphyrin-containing compound metabolism; protoporphyrin-IX biosynthesis; 5-aminolevulinate from L-glutamyl-tRNA(Glu): step 2/2.</text>
</comment>
<comment type="subunit">
    <text evidence="1">Homodimer.</text>
</comment>
<comment type="subcellular location">
    <subcellularLocation>
        <location evidence="1">Cytoplasm</location>
    </subcellularLocation>
</comment>
<comment type="similarity">
    <text evidence="1">Belongs to the class-III pyridoxal-phosphate-dependent aminotransferase family. HemL subfamily.</text>
</comment>
<sequence>MSQRSSELFERAQQLIPGGVNSPVRACLGVDSEPLFIARAAGSRLHTVDGETFIDFVESWGPMLLGHTHPEVTAAVHAAVDRGTSYGAPCEDEVVLAAKVVDALPGVDMVRMVNSGTEATMSALRLARGYTGRTKLVKFVGCYHGHADPFLASAGSGVATLSIPGTPGVPESTVRDTLLAPYNDLAAVKDLFALHGKDIAAIIVEAVAGNMGLVPPKAGFLEGLRELCDQHGALLIFDEVITGFRVSFGGAQQRFGITPDLTTLGKIIGGGLPVGAYGGKREIMQRIAPCGEVYQAGTLSGNPLAMAAGIATLDVLSRSDYAGLEARVSAFVKELEAILKGKGVPVRINTLASMFTVFFTNDPVTDFASAKTADGALYTSFYKQMRAQGIYLAPSPFEAAMVSFAHTDDDLAAMLDAARKVTF</sequence>
<feature type="chain" id="PRO_0000300906" description="Glutamate-1-semialdehyde 2,1-aminomutase">
    <location>
        <begin position="1"/>
        <end position="423"/>
    </location>
</feature>
<feature type="modified residue" description="N6-(pyridoxal phosphate)lysine" evidence="1">
    <location>
        <position position="266"/>
    </location>
</feature>
<proteinExistence type="inferred from homology"/>
<organism>
    <name type="scientific">Nitratidesulfovibrio vulgaris (strain DP4)</name>
    <name type="common">Desulfovibrio vulgaris</name>
    <dbReference type="NCBI Taxonomy" id="391774"/>
    <lineage>
        <taxon>Bacteria</taxon>
        <taxon>Pseudomonadati</taxon>
        <taxon>Thermodesulfobacteriota</taxon>
        <taxon>Desulfovibrionia</taxon>
        <taxon>Desulfovibrionales</taxon>
        <taxon>Desulfovibrionaceae</taxon>
        <taxon>Nitratidesulfovibrio</taxon>
    </lineage>
</organism>
<gene>
    <name evidence="1" type="primary">hemL</name>
    <name type="ordered locus">Dvul_0218</name>
</gene>
<protein>
    <recommendedName>
        <fullName evidence="1">Glutamate-1-semialdehyde 2,1-aminomutase</fullName>
        <shortName evidence="1">GSA</shortName>
        <ecNumber evidence="1">5.4.3.8</ecNumber>
    </recommendedName>
    <alternativeName>
        <fullName evidence="1">Glutamate-1-semialdehyde aminotransferase</fullName>
        <shortName evidence="1">GSA-AT</shortName>
    </alternativeName>
</protein>
<evidence type="ECO:0000255" key="1">
    <source>
        <dbReference type="HAMAP-Rule" id="MF_00375"/>
    </source>
</evidence>
<reference key="1">
    <citation type="journal article" date="2009" name="Environ. Microbiol.">
        <title>Contribution of mobile genetic elements to Desulfovibrio vulgaris genome plasticity.</title>
        <authorList>
            <person name="Walker C.B."/>
            <person name="Stolyar S."/>
            <person name="Chivian D."/>
            <person name="Pinel N."/>
            <person name="Gabster J.A."/>
            <person name="Dehal P.S."/>
            <person name="He Z."/>
            <person name="Yang Z.K."/>
            <person name="Yen H.C."/>
            <person name="Zhou J."/>
            <person name="Wall J.D."/>
            <person name="Hazen T.C."/>
            <person name="Arkin A.P."/>
            <person name="Stahl D.A."/>
        </authorList>
    </citation>
    <scope>NUCLEOTIDE SEQUENCE [LARGE SCALE GENOMIC DNA]</scope>
    <source>
        <strain>DP4</strain>
    </source>
</reference>
<keyword id="KW-0963">Cytoplasm</keyword>
<keyword id="KW-0413">Isomerase</keyword>
<keyword id="KW-0627">Porphyrin biosynthesis</keyword>
<keyword id="KW-0663">Pyridoxal phosphate</keyword>
<accession>A1V9X6</accession>
<dbReference type="EC" id="5.4.3.8" evidence="1"/>
<dbReference type="EMBL" id="CP000527">
    <property type="protein sequence ID" value="ABM27242.1"/>
    <property type="molecule type" value="Genomic_DNA"/>
</dbReference>
<dbReference type="RefSeq" id="WP_011791469.1">
    <property type="nucleotide sequence ID" value="NC_008751.1"/>
</dbReference>
<dbReference type="SMR" id="A1V9X6"/>
<dbReference type="KEGG" id="dvl:Dvul_0218"/>
<dbReference type="HOGENOM" id="CLU_016922_1_5_7"/>
<dbReference type="UniPathway" id="UPA00251">
    <property type="reaction ID" value="UER00317"/>
</dbReference>
<dbReference type="Proteomes" id="UP000009173">
    <property type="component" value="Chromosome"/>
</dbReference>
<dbReference type="GO" id="GO:0005737">
    <property type="term" value="C:cytoplasm"/>
    <property type="evidence" value="ECO:0007669"/>
    <property type="project" value="UniProtKB-SubCell"/>
</dbReference>
<dbReference type="GO" id="GO:0042286">
    <property type="term" value="F:glutamate-1-semialdehyde 2,1-aminomutase activity"/>
    <property type="evidence" value="ECO:0007669"/>
    <property type="project" value="UniProtKB-UniRule"/>
</dbReference>
<dbReference type="GO" id="GO:0030170">
    <property type="term" value="F:pyridoxal phosphate binding"/>
    <property type="evidence" value="ECO:0007669"/>
    <property type="project" value="InterPro"/>
</dbReference>
<dbReference type="GO" id="GO:0008483">
    <property type="term" value="F:transaminase activity"/>
    <property type="evidence" value="ECO:0007669"/>
    <property type="project" value="InterPro"/>
</dbReference>
<dbReference type="GO" id="GO:0006782">
    <property type="term" value="P:protoporphyrinogen IX biosynthetic process"/>
    <property type="evidence" value="ECO:0007669"/>
    <property type="project" value="UniProtKB-UniRule"/>
</dbReference>
<dbReference type="CDD" id="cd00610">
    <property type="entry name" value="OAT_like"/>
    <property type="match status" value="1"/>
</dbReference>
<dbReference type="FunFam" id="3.40.640.10:FF:000021">
    <property type="entry name" value="Glutamate-1-semialdehyde 2,1-aminomutase"/>
    <property type="match status" value="1"/>
</dbReference>
<dbReference type="Gene3D" id="3.90.1150.10">
    <property type="entry name" value="Aspartate Aminotransferase, domain 1"/>
    <property type="match status" value="1"/>
</dbReference>
<dbReference type="Gene3D" id="3.40.640.10">
    <property type="entry name" value="Type I PLP-dependent aspartate aminotransferase-like (Major domain)"/>
    <property type="match status" value="1"/>
</dbReference>
<dbReference type="HAMAP" id="MF_00375">
    <property type="entry name" value="HemL_aminotrans_3"/>
    <property type="match status" value="1"/>
</dbReference>
<dbReference type="InterPro" id="IPR004639">
    <property type="entry name" value="4pyrrol_synth_GluAld_NH2Trfase"/>
</dbReference>
<dbReference type="InterPro" id="IPR005814">
    <property type="entry name" value="Aminotrans_3"/>
</dbReference>
<dbReference type="InterPro" id="IPR049704">
    <property type="entry name" value="Aminotrans_3_PPA_site"/>
</dbReference>
<dbReference type="InterPro" id="IPR015424">
    <property type="entry name" value="PyrdxlP-dep_Trfase"/>
</dbReference>
<dbReference type="InterPro" id="IPR015421">
    <property type="entry name" value="PyrdxlP-dep_Trfase_major"/>
</dbReference>
<dbReference type="InterPro" id="IPR015422">
    <property type="entry name" value="PyrdxlP-dep_Trfase_small"/>
</dbReference>
<dbReference type="NCBIfam" id="TIGR00713">
    <property type="entry name" value="hemL"/>
    <property type="match status" value="1"/>
</dbReference>
<dbReference type="NCBIfam" id="NF000818">
    <property type="entry name" value="PRK00062.1"/>
    <property type="match status" value="1"/>
</dbReference>
<dbReference type="PANTHER" id="PTHR43713">
    <property type="entry name" value="GLUTAMATE-1-SEMIALDEHYDE 2,1-AMINOMUTASE"/>
    <property type="match status" value="1"/>
</dbReference>
<dbReference type="PANTHER" id="PTHR43713:SF3">
    <property type="entry name" value="GLUTAMATE-1-SEMIALDEHYDE 2,1-AMINOMUTASE 1, CHLOROPLASTIC-RELATED"/>
    <property type="match status" value="1"/>
</dbReference>
<dbReference type="Pfam" id="PF00202">
    <property type="entry name" value="Aminotran_3"/>
    <property type="match status" value="1"/>
</dbReference>
<dbReference type="SUPFAM" id="SSF53383">
    <property type="entry name" value="PLP-dependent transferases"/>
    <property type="match status" value="1"/>
</dbReference>
<dbReference type="PROSITE" id="PS00600">
    <property type="entry name" value="AA_TRANSFER_CLASS_3"/>
    <property type="match status" value="1"/>
</dbReference>